<feature type="chain" id="PRO_0000327487" description="6-phosphogluconate dehydrogenase, decarboxylating">
    <location>
        <begin position="1"/>
        <end position="493"/>
    </location>
</feature>
<feature type="active site" description="Proton acceptor" evidence="1">
    <location>
        <position position="187"/>
    </location>
</feature>
<feature type="active site" description="Proton donor" evidence="1">
    <location>
        <position position="194"/>
    </location>
</feature>
<feature type="binding site" evidence="1">
    <location>
        <begin position="12"/>
        <end position="17"/>
    </location>
    <ligand>
        <name>NADP(+)</name>
        <dbReference type="ChEBI" id="CHEBI:58349"/>
    </ligand>
</feature>
<feature type="binding site" evidence="1">
    <location>
        <begin position="35"/>
        <end position="37"/>
    </location>
    <ligand>
        <name>NADP(+)</name>
        <dbReference type="ChEBI" id="CHEBI:58349"/>
    </ligand>
</feature>
<feature type="binding site" evidence="1">
    <location>
        <begin position="77"/>
        <end position="79"/>
    </location>
    <ligand>
        <name>NADP(+)</name>
        <dbReference type="ChEBI" id="CHEBI:58349"/>
    </ligand>
</feature>
<feature type="binding site" evidence="1">
    <location>
        <position position="105"/>
    </location>
    <ligand>
        <name>NADP(+)</name>
        <dbReference type="ChEBI" id="CHEBI:58349"/>
    </ligand>
</feature>
<feature type="binding site" description="in other chain" evidence="1">
    <location>
        <position position="105"/>
    </location>
    <ligand>
        <name>substrate</name>
        <note>ligand shared between dimeric partners</note>
    </ligand>
</feature>
<feature type="binding site" description="in other chain" evidence="1">
    <location>
        <begin position="131"/>
        <end position="133"/>
    </location>
    <ligand>
        <name>substrate</name>
        <note>ligand shared between dimeric partners</note>
    </ligand>
</feature>
<feature type="binding site" description="in other chain" evidence="1">
    <location>
        <begin position="190"/>
        <end position="191"/>
    </location>
    <ligand>
        <name>substrate</name>
        <note>ligand shared between dimeric partners</note>
    </ligand>
</feature>
<feature type="binding site" description="in other chain" evidence="1">
    <location>
        <position position="195"/>
    </location>
    <ligand>
        <name>substrate</name>
        <note>ligand shared between dimeric partners</note>
    </ligand>
</feature>
<feature type="binding site" description="in other chain" evidence="1">
    <location>
        <position position="266"/>
    </location>
    <ligand>
        <name>substrate</name>
        <note>ligand shared between dimeric partners</note>
    </ligand>
</feature>
<feature type="binding site" description="in other chain" evidence="1">
    <location>
        <position position="293"/>
    </location>
    <ligand>
        <name>substrate</name>
        <note>ligand shared between dimeric partners</note>
    </ligand>
</feature>
<feature type="binding site" evidence="1">
    <location>
        <position position="456"/>
    </location>
    <ligand>
        <name>substrate</name>
        <note>ligand shared between dimeric partners</note>
    </ligand>
</feature>
<feature type="binding site" evidence="1">
    <location>
        <position position="462"/>
    </location>
    <ligand>
        <name>substrate</name>
        <note>ligand shared between dimeric partners</note>
    </ligand>
</feature>
<accession>Q8TA03</accession>
<accession>Q54YT0</accession>
<comment type="function">
    <text evidence="1">Catalyzes the oxidative decarboxylation of 6-phosphogluconate to ribulose 5-phosphate and CO(2), with concomitant reduction of NADP to NADPH.</text>
</comment>
<comment type="catalytic activity">
    <reaction>
        <text>6-phospho-D-gluconate + NADP(+) = D-ribulose 5-phosphate + CO2 + NADPH</text>
        <dbReference type="Rhea" id="RHEA:10116"/>
        <dbReference type="ChEBI" id="CHEBI:16526"/>
        <dbReference type="ChEBI" id="CHEBI:57783"/>
        <dbReference type="ChEBI" id="CHEBI:58121"/>
        <dbReference type="ChEBI" id="CHEBI:58349"/>
        <dbReference type="ChEBI" id="CHEBI:58759"/>
        <dbReference type="EC" id="1.1.1.44"/>
    </reaction>
</comment>
<comment type="pathway">
    <text>Carbohydrate degradation; pentose phosphate pathway; D-ribulose 5-phosphate from D-glucose 6-phosphate (oxidative stage): step 3/3.</text>
</comment>
<comment type="subunit">
    <text evidence="1">Homodimer.</text>
</comment>
<comment type="similarity">
    <text evidence="2">Belongs to the 6-phosphogluconate dehydrogenase family.</text>
</comment>
<organism>
    <name type="scientific">Dictyostelium discoideum</name>
    <name type="common">Social amoeba</name>
    <dbReference type="NCBI Taxonomy" id="44689"/>
    <lineage>
        <taxon>Eukaryota</taxon>
        <taxon>Amoebozoa</taxon>
        <taxon>Evosea</taxon>
        <taxon>Eumycetozoa</taxon>
        <taxon>Dictyostelia</taxon>
        <taxon>Dictyosteliales</taxon>
        <taxon>Dictyosteliaceae</taxon>
        <taxon>Dictyostelium</taxon>
    </lineage>
</organism>
<dbReference type="EC" id="1.1.1.44"/>
<dbReference type="EMBL" id="AF394516">
    <property type="protein sequence ID" value="AAL76326.1"/>
    <property type="molecule type" value="Genomic_DNA"/>
</dbReference>
<dbReference type="EMBL" id="AAFI02000023">
    <property type="protein sequence ID" value="EAL68115.1"/>
    <property type="molecule type" value="Genomic_DNA"/>
</dbReference>
<dbReference type="RefSeq" id="XP_642122.1">
    <property type="nucleotide sequence ID" value="XM_637030.1"/>
</dbReference>
<dbReference type="SMR" id="Q8TA03"/>
<dbReference type="FunCoup" id="Q8TA03">
    <property type="interactions" value="588"/>
</dbReference>
<dbReference type="STRING" id="44689.Q8TA03"/>
<dbReference type="PaxDb" id="44689-DDB0215011"/>
<dbReference type="EnsemblProtists" id="EAL68115">
    <property type="protein sequence ID" value="EAL68115"/>
    <property type="gene ID" value="DDB_G0277885"/>
</dbReference>
<dbReference type="GeneID" id="8621331"/>
<dbReference type="KEGG" id="ddi:DDB_G0277885"/>
<dbReference type="dictyBase" id="DDB_G0277885">
    <property type="gene designation" value="gnd"/>
</dbReference>
<dbReference type="VEuPathDB" id="AmoebaDB:DDB_G0277885"/>
<dbReference type="eggNOG" id="KOG2653">
    <property type="taxonomic scope" value="Eukaryota"/>
</dbReference>
<dbReference type="HOGENOM" id="CLU_024540_4_2_1"/>
<dbReference type="InParanoid" id="Q8TA03"/>
<dbReference type="OMA" id="QALYMGK"/>
<dbReference type="PhylomeDB" id="Q8TA03"/>
<dbReference type="Reactome" id="R-DDI-71336">
    <property type="pathway name" value="Pentose phosphate pathway"/>
</dbReference>
<dbReference type="UniPathway" id="UPA00115">
    <property type="reaction ID" value="UER00410"/>
</dbReference>
<dbReference type="PRO" id="PR:Q8TA03"/>
<dbReference type="Proteomes" id="UP000002195">
    <property type="component" value="Chromosome 3"/>
</dbReference>
<dbReference type="GO" id="GO:0005829">
    <property type="term" value="C:cytosol"/>
    <property type="evidence" value="ECO:0000318"/>
    <property type="project" value="GO_Central"/>
</dbReference>
<dbReference type="GO" id="GO:0050661">
    <property type="term" value="F:NADP binding"/>
    <property type="evidence" value="ECO:0000318"/>
    <property type="project" value="GO_Central"/>
</dbReference>
<dbReference type="GO" id="GO:0004616">
    <property type="term" value="F:phosphogluconate dehydrogenase (decarboxylating) activity"/>
    <property type="evidence" value="ECO:0000318"/>
    <property type="project" value="GO_Central"/>
</dbReference>
<dbReference type="GO" id="GO:0019521">
    <property type="term" value="P:D-gluconate metabolic process"/>
    <property type="evidence" value="ECO:0007669"/>
    <property type="project" value="UniProtKB-KW"/>
</dbReference>
<dbReference type="GO" id="GO:0009051">
    <property type="term" value="P:pentose-phosphate shunt, oxidative branch"/>
    <property type="evidence" value="ECO:0000318"/>
    <property type="project" value="GO_Central"/>
</dbReference>
<dbReference type="FunFam" id="1.10.1040.10:FF:000002">
    <property type="entry name" value="6-phosphogluconate dehydrogenase, decarboxylating"/>
    <property type="match status" value="1"/>
</dbReference>
<dbReference type="FunFam" id="1.20.5.320:FF:000002">
    <property type="entry name" value="6-phosphogluconate dehydrogenase, decarboxylating"/>
    <property type="match status" value="1"/>
</dbReference>
<dbReference type="FunFam" id="3.40.50.720:FF:000007">
    <property type="entry name" value="6-phosphogluconate dehydrogenase, decarboxylating"/>
    <property type="match status" value="1"/>
</dbReference>
<dbReference type="Gene3D" id="1.20.5.320">
    <property type="entry name" value="6-Phosphogluconate Dehydrogenase, domain 3"/>
    <property type="match status" value="1"/>
</dbReference>
<dbReference type="Gene3D" id="1.10.1040.10">
    <property type="entry name" value="N-(1-d-carboxylethyl)-l-norvaline Dehydrogenase, domain 2"/>
    <property type="match status" value="1"/>
</dbReference>
<dbReference type="Gene3D" id="3.40.50.720">
    <property type="entry name" value="NAD(P)-binding Rossmann-like Domain"/>
    <property type="match status" value="1"/>
</dbReference>
<dbReference type="InterPro" id="IPR008927">
    <property type="entry name" value="6-PGluconate_DH-like_C_sf"/>
</dbReference>
<dbReference type="InterPro" id="IPR013328">
    <property type="entry name" value="6PGD_dom2"/>
</dbReference>
<dbReference type="InterPro" id="IPR006114">
    <property type="entry name" value="6PGDH_C"/>
</dbReference>
<dbReference type="InterPro" id="IPR006113">
    <property type="entry name" value="6PGDH_Gnd/GntZ"/>
</dbReference>
<dbReference type="InterPro" id="IPR006115">
    <property type="entry name" value="6PGDH_NADP-bd"/>
</dbReference>
<dbReference type="InterPro" id="IPR006184">
    <property type="entry name" value="6PGdom_BS"/>
</dbReference>
<dbReference type="InterPro" id="IPR036291">
    <property type="entry name" value="NAD(P)-bd_dom_sf"/>
</dbReference>
<dbReference type="InterPro" id="IPR006183">
    <property type="entry name" value="Pgluconate_DH"/>
</dbReference>
<dbReference type="NCBIfam" id="TIGR00873">
    <property type="entry name" value="gnd"/>
    <property type="match status" value="1"/>
</dbReference>
<dbReference type="NCBIfam" id="NF006765">
    <property type="entry name" value="PRK09287.1"/>
    <property type="match status" value="1"/>
</dbReference>
<dbReference type="PANTHER" id="PTHR11811">
    <property type="entry name" value="6-PHOSPHOGLUCONATE DEHYDROGENASE"/>
    <property type="match status" value="1"/>
</dbReference>
<dbReference type="Pfam" id="PF00393">
    <property type="entry name" value="6PGD"/>
    <property type="match status" value="1"/>
</dbReference>
<dbReference type="Pfam" id="PF03446">
    <property type="entry name" value="NAD_binding_2"/>
    <property type="match status" value="1"/>
</dbReference>
<dbReference type="PIRSF" id="PIRSF000109">
    <property type="entry name" value="6PGD"/>
    <property type="match status" value="1"/>
</dbReference>
<dbReference type="PRINTS" id="PR00076">
    <property type="entry name" value="6PGDHDRGNASE"/>
</dbReference>
<dbReference type="SMART" id="SM01350">
    <property type="entry name" value="6PGD"/>
    <property type="match status" value="1"/>
</dbReference>
<dbReference type="SUPFAM" id="SSF48179">
    <property type="entry name" value="6-phosphogluconate dehydrogenase C-terminal domain-like"/>
    <property type="match status" value="1"/>
</dbReference>
<dbReference type="SUPFAM" id="SSF51735">
    <property type="entry name" value="NAD(P)-binding Rossmann-fold domains"/>
    <property type="match status" value="1"/>
</dbReference>
<dbReference type="PROSITE" id="PS00461">
    <property type="entry name" value="6PGD"/>
    <property type="match status" value="1"/>
</dbReference>
<proteinExistence type="evidence at protein level"/>
<reference key="1">
    <citation type="journal article" date="2002" name="Curr. Biol.">
        <title>A cyanobacterial gene in nonphotosynthetic protists -- an early chloroplast acquisition in eukaryotes?</title>
        <authorList>
            <person name="Andersson J.O."/>
            <person name="Roger A.J."/>
        </authorList>
    </citation>
    <scope>NUCLEOTIDE SEQUENCE [GENOMIC DNA]</scope>
</reference>
<reference key="2">
    <citation type="journal article" date="2005" name="Nature">
        <title>The genome of the social amoeba Dictyostelium discoideum.</title>
        <authorList>
            <person name="Eichinger L."/>
            <person name="Pachebat J.A."/>
            <person name="Gloeckner G."/>
            <person name="Rajandream M.A."/>
            <person name="Sucgang R."/>
            <person name="Berriman M."/>
            <person name="Song J."/>
            <person name="Olsen R."/>
            <person name="Szafranski K."/>
            <person name="Xu Q."/>
            <person name="Tunggal B."/>
            <person name="Kummerfeld S."/>
            <person name="Madera M."/>
            <person name="Konfortov B.A."/>
            <person name="Rivero F."/>
            <person name="Bankier A.T."/>
            <person name="Lehmann R."/>
            <person name="Hamlin N."/>
            <person name="Davies R."/>
            <person name="Gaudet P."/>
            <person name="Fey P."/>
            <person name="Pilcher K."/>
            <person name="Chen G."/>
            <person name="Saunders D."/>
            <person name="Sodergren E.J."/>
            <person name="Davis P."/>
            <person name="Kerhornou A."/>
            <person name="Nie X."/>
            <person name="Hall N."/>
            <person name="Anjard C."/>
            <person name="Hemphill L."/>
            <person name="Bason N."/>
            <person name="Farbrother P."/>
            <person name="Desany B."/>
            <person name="Just E."/>
            <person name="Morio T."/>
            <person name="Rost R."/>
            <person name="Churcher C.M."/>
            <person name="Cooper J."/>
            <person name="Haydock S."/>
            <person name="van Driessche N."/>
            <person name="Cronin A."/>
            <person name="Goodhead I."/>
            <person name="Muzny D.M."/>
            <person name="Mourier T."/>
            <person name="Pain A."/>
            <person name="Lu M."/>
            <person name="Harper D."/>
            <person name="Lindsay R."/>
            <person name="Hauser H."/>
            <person name="James K.D."/>
            <person name="Quiles M."/>
            <person name="Madan Babu M."/>
            <person name="Saito T."/>
            <person name="Buchrieser C."/>
            <person name="Wardroper A."/>
            <person name="Felder M."/>
            <person name="Thangavelu M."/>
            <person name="Johnson D."/>
            <person name="Knights A."/>
            <person name="Loulseged H."/>
            <person name="Mungall K.L."/>
            <person name="Oliver K."/>
            <person name="Price C."/>
            <person name="Quail M.A."/>
            <person name="Urushihara H."/>
            <person name="Hernandez J."/>
            <person name="Rabbinowitsch E."/>
            <person name="Steffen D."/>
            <person name="Sanders M."/>
            <person name="Ma J."/>
            <person name="Kohara Y."/>
            <person name="Sharp S."/>
            <person name="Simmonds M.N."/>
            <person name="Spiegler S."/>
            <person name="Tivey A."/>
            <person name="Sugano S."/>
            <person name="White B."/>
            <person name="Walker D."/>
            <person name="Woodward J.R."/>
            <person name="Winckler T."/>
            <person name="Tanaka Y."/>
            <person name="Shaulsky G."/>
            <person name="Schleicher M."/>
            <person name="Weinstock G.M."/>
            <person name="Rosenthal A."/>
            <person name="Cox E.C."/>
            <person name="Chisholm R.L."/>
            <person name="Gibbs R.A."/>
            <person name="Loomis W.F."/>
            <person name="Platzer M."/>
            <person name="Kay R.R."/>
            <person name="Williams J.G."/>
            <person name="Dear P.H."/>
            <person name="Noegel A.A."/>
            <person name="Barrell B.G."/>
            <person name="Kuspa A."/>
        </authorList>
    </citation>
    <scope>NUCLEOTIDE SEQUENCE [LARGE SCALE GENOMIC DNA]</scope>
    <source>
        <strain>AX4</strain>
    </source>
</reference>
<reference key="3">
    <citation type="submission" date="2010-01" db="UniProtKB">
        <authorList>
            <person name="Bienvenut W.V."/>
            <person name="Veltman D.M."/>
            <person name="Insall R.H."/>
        </authorList>
    </citation>
    <scope>PROTEIN SEQUENCE OF 37-48; 305-320 AND 447-456</scope>
    <scope>IDENTIFICATION BY MASS SPECTROMETRY</scope>
</reference>
<name>6PGD_DICDI</name>
<gene>
    <name type="primary">gnd</name>
    <name type="synonym">PGD</name>
    <name type="ORF">DDB_G0277885</name>
</gene>
<protein>
    <recommendedName>
        <fullName>6-phosphogluconate dehydrogenase, decarboxylating</fullName>
        <ecNumber>1.1.1.44</ecNumber>
    </recommendedName>
</protein>
<keyword id="KW-0903">Direct protein sequencing</keyword>
<keyword id="KW-0311">Gluconate utilization</keyword>
<keyword id="KW-0521">NADP</keyword>
<keyword id="KW-0560">Oxidoreductase</keyword>
<keyword id="KW-0570">Pentose shunt</keyword>
<keyword id="KW-1185">Reference proteome</keyword>
<sequence>MTEAKGDIGLIGLAVMGENLVLNMESRGFTCSVYNRTTSKVDEFVQGRGKGKKFIGCHSLETLVQSLKTPRRVMLMVKAGEVVDHFIQLLLPLLEKGDIIIDGGNSLYTDSDRRTKDLDAKGILFIGTGVSGGEEGALLGPSIMPGGNPKAWEHVKPIFQAISAKVQPGDQPCCDWVGDGGAGHYVKMVHNGIEYGDMQLISEAYFILKHYLGLSNDELQKTFAKWNTGDLDSYLIEITADIFAKKCEKDPNTYVVDTILDSAGQKGTGKWTAINALDVGIPLTLVAESVFARCVSSFKEERVKASTILAGPNPNEANKKFTGDKEQVIEAVRQALFASKLVSYAQGFTMMKAAAKEYKWNLNYGNIALLWRGGCIIRSTFLGEIKGAFDKNPQLDNLLTDCWFRDKLAAAQDGWRQVASISVLHGIPTPAFTSALSYYDSYRCAKLSANLVQAQRDYFGAHTFQLLDDPKGAPVHVNWTGRGGSTHSTTYSI</sequence>
<evidence type="ECO:0000250" key="1"/>
<evidence type="ECO:0000305" key="2"/>